<gene>
    <name type="primary">hdl-1</name>
    <name type="synonym">aad-1</name>
    <name type="ORF">ZK829.2</name>
</gene>
<organism>
    <name type="scientific">Caenorhabditis elegans</name>
    <dbReference type="NCBI Taxonomy" id="6239"/>
    <lineage>
        <taxon>Eukaryota</taxon>
        <taxon>Metazoa</taxon>
        <taxon>Ecdysozoa</taxon>
        <taxon>Nematoda</taxon>
        <taxon>Chromadorea</taxon>
        <taxon>Rhabditida</taxon>
        <taxon>Rhabditina</taxon>
        <taxon>Rhabditomorpha</taxon>
        <taxon>Rhabditoidea</taxon>
        <taxon>Rhabditidae</taxon>
        <taxon>Peloderinae</taxon>
        <taxon>Caenorhabditis</taxon>
    </lineage>
</organism>
<dbReference type="EC" id="4.1.1.28"/>
<dbReference type="EMBL" id="Z73899">
    <property type="protein sequence ID" value="CAA98072.2"/>
    <property type="molecule type" value="Genomic_DNA"/>
</dbReference>
<dbReference type="EMBL" id="Z11576">
    <property type="protein sequence ID" value="CAA77663.1"/>
    <property type="molecule type" value="mRNA"/>
</dbReference>
<dbReference type="PIR" id="T28020">
    <property type="entry name" value="T28020"/>
</dbReference>
<dbReference type="RefSeq" id="NP_502265.2">
    <property type="nucleotide sequence ID" value="NM_069864.5"/>
</dbReference>
<dbReference type="SMR" id="P34751"/>
<dbReference type="FunCoup" id="P34751">
    <property type="interactions" value="177"/>
</dbReference>
<dbReference type="STRING" id="6239.ZK829.2.1"/>
<dbReference type="PaxDb" id="6239-ZK829.2"/>
<dbReference type="EnsemblMetazoa" id="ZK829.2.1">
    <property type="protein sequence ID" value="ZK829.2.1"/>
    <property type="gene ID" value="WBGene00001839"/>
</dbReference>
<dbReference type="GeneID" id="178129"/>
<dbReference type="KEGG" id="cel:CELE_ZK829.2"/>
<dbReference type="UCSC" id="ZK829.2">
    <property type="organism name" value="c. elegans"/>
</dbReference>
<dbReference type="AGR" id="WB:WBGene00001839"/>
<dbReference type="CTD" id="178129"/>
<dbReference type="WormBase" id="ZK829.2">
    <property type="protein sequence ID" value="CE40593"/>
    <property type="gene ID" value="WBGene00001839"/>
    <property type="gene designation" value="hdl-1"/>
</dbReference>
<dbReference type="eggNOG" id="KOG0628">
    <property type="taxonomic scope" value="Eukaryota"/>
</dbReference>
<dbReference type="HOGENOM" id="CLU_014028_0_0_1"/>
<dbReference type="InParanoid" id="P34751"/>
<dbReference type="OMA" id="KGVACWF"/>
<dbReference type="OrthoDB" id="639767at2759"/>
<dbReference type="PhylomeDB" id="P34751"/>
<dbReference type="UniPathway" id="UPA00747">
    <property type="reaction ID" value="UER00734"/>
</dbReference>
<dbReference type="PRO" id="PR:P34751"/>
<dbReference type="Proteomes" id="UP000001940">
    <property type="component" value="Chromosome IV"/>
</dbReference>
<dbReference type="Bgee" id="WBGene00001839">
    <property type="expression patterns" value="Expressed in adult organism and 1 other cell type or tissue"/>
</dbReference>
<dbReference type="GO" id="GO:0005737">
    <property type="term" value="C:cytoplasm"/>
    <property type="evidence" value="ECO:0000318"/>
    <property type="project" value="GO_Central"/>
</dbReference>
<dbReference type="GO" id="GO:0036467">
    <property type="term" value="F:5-hydroxy-L-tryptophan decarboxylase activity"/>
    <property type="evidence" value="ECO:0007669"/>
    <property type="project" value="RHEA"/>
</dbReference>
<dbReference type="GO" id="GO:0016831">
    <property type="term" value="F:carboxy-lyase activity"/>
    <property type="evidence" value="ECO:0000318"/>
    <property type="project" value="GO_Central"/>
</dbReference>
<dbReference type="GO" id="GO:0036468">
    <property type="term" value="F:L-dopa decarboxylase activity"/>
    <property type="evidence" value="ECO:0007669"/>
    <property type="project" value="RHEA"/>
</dbReference>
<dbReference type="GO" id="GO:0030170">
    <property type="term" value="F:pyridoxal phosphate binding"/>
    <property type="evidence" value="ECO:0007669"/>
    <property type="project" value="InterPro"/>
</dbReference>
<dbReference type="GO" id="GO:0006520">
    <property type="term" value="P:amino acid metabolic process"/>
    <property type="evidence" value="ECO:0007669"/>
    <property type="project" value="InterPro"/>
</dbReference>
<dbReference type="GO" id="GO:0019752">
    <property type="term" value="P:carboxylic acid metabolic process"/>
    <property type="evidence" value="ECO:0007669"/>
    <property type="project" value="InterPro"/>
</dbReference>
<dbReference type="GO" id="GO:0042416">
    <property type="term" value="P:dopamine biosynthetic process"/>
    <property type="evidence" value="ECO:0007669"/>
    <property type="project" value="UniProtKB-UniPathway"/>
</dbReference>
<dbReference type="Gene3D" id="3.90.1150.10">
    <property type="entry name" value="Aspartate Aminotransferase, domain 1"/>
    <property type="match status" value="1"/>
</dbReference>
<dbReference type="Gene3D" id="1.20.1340.10">
    <property type="entry name" value="dopa decarboxylase, N-terminal domain"/>
    <property type="match status" value="1"/>
</dbReference>
<dbReference type="Gene3D" id="3.40.640.10">
    <property type="entry name" value="Type I PLP-dependent aspartate aminotransferase-like (Major domain)"/>
    <property type="match status" value="1"/>
</dbReference>
<dbReference type="InterPro" id="IPR010977">
    <property type="entry name" value="Aromatic_deC"/>
</dbReference>
<dbReference type="InterPro" id="IPR002129">
    <property type="entry name" value="PyrdxlP-dep_de-COase"/>
</dbReference>
<dbReference type="InterPro" id="IPR015424">
    <property type="entry name" value="PyrdxlP-dep_Trfase"/>
</dbReference>
<dbReference type="InterPro" id="IPR015421">
    <property type="entry name" value="PyrdxlP-dep_Trfase_major"/>
</dbReference>
<dbReference type="InterPro" id="IPR015422">
    <property type="entry name" value="PyrdxlP-dep_Trfase_small"/>
</dbReference>
<dbReference type="PANTHER" id="PTHR11999:SF59">
    <property type="entry name" value="AROMATIC-L-AMINO-ACID DECARBOXYLASE-RELATED"/>
    <property type="match status" value="1"/>
</dbReference>
<dbReference type="PANTHER" id="PTHR11999">
    <property type="entry name" value="GROUP II PYRIDOXAL-5-PHOSPHATE DECARBOXYLASE"/>
    <property type="match status" value="1"/>
</dbReference>
<dbReference type="Pfam" id="PF00282">
    <property type="entry name" value="Pyridoxal_deC"/>
    <property type="match status" value="1"/>
</dbReference>
<dbReference type="PRINTS" id="PR00800">
    <property type="entry name" value="YHDCRBOXLASE"/>
</dbReference>
<dbReference type="SUPFAM" id="SSF53383">
    <property type="entry name" value="PLP-dependent transferases"/>
    <property type="match status" value="1"/>
</dbReference>
<keyword id="KW-0127">Catecholamine biosynthesis</keyword>
<keyword id="KW-0210">Decarboxylase</keyword>
<keyword id="KW-0456">Lyase</keyword>
<keyword id="KW-0663">Pyridoxal phosphate</keyword>
<keyword id="KW-1185">Reference proteome</keyword>
<proteinExistence type="evidence at transcript level"/>
<accession>P34751</accession>
<accession>Q23619</accession>
<feature type="chain" id="PRO_0000146943" description="Probable aromatic-L-amino-acid decarboxylase">
    <location>
        <begin position="1"/>
        <end position="905"/>
    </location>
</feature>
<feature type="region of interest" description="Disordered" evidence="2">
    <location>
        <begin position="250"/>
        <end position="296"/>
    </location>
</feature>
<feature type="region of interest" description="Disordered" evidence="2">
    <location>
        <begin position="861"/>
        <end position="905"/>
    </location>
</feature>
<feature type="compositionally biased region" description="Basic and acidic residues" evidence="2">
    <location>
        <begin position="280"/>
        <end position="296"/>
    </location>
</feature>
<feature type="compositionally biased region" description="Polar residues" evidence="2">
    <location>
        <begin position="889"/>
        <end position="898"/>
    </location>
</feature>
<feature type="binding site" evidence="1">
    <location>
        <position position="492"/>
    </location>
    <ligand>
        <name>pyridoxal 5'-phosphate</name>
        <dbReference type="ChEBI" id="CHEBI:597326"/>
    </ligand>
</feature>
<feature type="binding site" evidence="1">
    <location>
        <position position="591"/>
    </location>
    <ligand>
        <name>pyridoxal 5'-phosphate</name>
        <dbReference type="ChEBI" id="CHEBI:597326"/>
    </ligand>
</feature>
<feature type="modified residue" description="N6-(pyridoxal phosphate)lysine" evidence="1">
    <location>
        <position position="648"/>
    </location>
</feature>
<feature type="sequence conflict" description="In Ref. 2; CAA77663." evidence="3" ref="2">
    <original>HPNFHSFY</original>
    <variation>SSKFSFIL</variation>
    <location>
        <begin position="415"/>
        <end position="422"/>
    </location>
</feature>
<reference key="1">
    <citation type="journal article" date="1998" name="Science">
        <title>Genome sequence of the nematode C. elegans: a platform for investigating biology.</title>
        <authorList>
            <consortium name="The C. elegans sequencing consortium"/>
        </authorList>
    </citation>
    <scope>NUCLEOTIDE SEQUENCE [LARGE SCALE GENOMIC DNA]</scope>
    <source>
        <strain>Bristol N2</strain>
    </source>
</reference>
<reference key="2">
    <citation type="journal article" date="1993" name="Mol. Gen. Genet.">
        <title>Molecular analysis of two genes between let-653 and let-56 in the unc-22(IV) region of Caenorhabditis elegans.</title>
        <authorList>
            <person name="Marra M.A."/>
            <person name="Prasad S.S."/>
            <person name="Baillie D.L."/>
        </authorList>
    </citation>
    <scope>NUCLEOTIDE SEQUENCE [MRNA] OF 281-905</scope>
    <source>
        <strain>Bristol N2</strain>
    </source>
</reference>
<comment type="function">
    <text>Catalyzes the decarboxylation of L-3,4-dihydroxyphenylalanine (DOPA) to dopamine, L-5-hydroxytryptophan to serotonin and L-tryptophan to tryptamine.</text>
</comment>
<comment type="catalytic activity">
    <reaction>
        <text>L-dopa + H(+) = dopamine + CO2</text>
        <dbReference type="Rhea" id="RHEA:12272"/>
        <dbReference type="ChEBI" id="CHEBI:15378"/>
        <dbReference type="ChEBI" id="CHEBI:16526"/>
        <dbReference type="ChEBI" id="CHEBI:57504"/>
        <dbReference type="ChEBI" id="CHEBI:59905"/>
        <dbReference type="EC" id="4.1.1.28"/>
    </reaction>
</comment>
<comment type="catalytic activity">
    <reaction>
        <text>5-hydroxy-L-tryptophan + H(+) = serotonin + CO2</text>
        <dbReference type="Rhea" id="RHEA:18533"/>
        <dbReference type="ChEBI" id="CHEBI:15378"/>
        <dbReference type="ChEBI" id="CHEBI:16526"/>
        <dbReference type="ChEBI" id="CHEBI:58266"/>
        <dbReference type="ChEBI" id="CHEBI:350546"/>
        <dbReference type="EC" id="4.1.1.28"/>
    </reaction>
</comment>
<comment type="cofactor">
    <cofactor>
        <name>pyridoxal 5'-phosphate</name>
        <dbReference type="ChEBI" id="CHEBI:597326"/>
    </cofactor>
</comment>
<comment type="pathway">
    <text>Catecholamine biosynthesis; dopamine biosynthesis; dopamine from L-tyrosine: step 2/2.</text>
</comment>
<comment type="subunit">
    <text evidence="1">Homodimer.</text>
</comment>
<comment type="similarity">
    <text evidence="3">Belongs to the group II decarboxylase family.</text>
</comment>
<evidence type="ECO:0000250" key="1"/>
<evidence type="ECO:0000256" key="2">
    <source>
        <dbReference type="SAM" id="MobiDB-lite"/>
    </source>
</evidence>
<evidence type="ECO:0000305" key="3"/>
<name>DDC_CAEEL</name>
<sequence>MSEKGETLIEDTAEIEFEQTVDKTQQWGRLKNAAAFSLFRDLHMNESLQRKHARSDYKVYDLNNRVIFHVINTTAMPITKDGPFCLKVMNKDKKSVAKFLRNEPKRSYKQTGLASLFGCCSDTEDTMEVLDDNGLIIATSFLHHDQFRGILITMKDPAGKVLIGIQASRDQKDVFAVSGPDNRYLGEIRQKIISSGNSTDNYKGVACWFSTEVSLNVKVFFMAAAFLIEIDYFSETKSRQAPFRTPEADYLNPIIKTPPHNERVPKMKTNISKTRKKKGKVSDASKDSRPSETKKETLMMPEIHHTKHFDSIGGEEQAFAKKEKVEEFKPTEAVKEEVDVNGMSRDQFRNAAKKVVDYLMKQDESIRAARCSPALKPGYLKALLPPKAPQKAEDIDDILEDYHKLIVPGLSHSSHPNFHSFYPAGNSFHCLLADLLGGHIGDAGFYWTSNPALTELEVLMMDWLGEMMALPKEFLLFPEASRGGGCMQRSDTESNFLVLVAARTDMIRRMKQRDKRLRSSDILARLVAYTSSDARRSIKMKMAAEVAMVKMRVLPTDQNFILRGDTLHAAIMADIERGLIPFFVGANFGTSGPCSFDHLHELGPVCREHGTWLHVDAAYAGTALICPEIRGLMRGIDWADSFCTTPSKLIIAVCDVCCLWVRDRHKLQHASLENHPDLPFKGLPTSQRVGALKIWFMIRSFGVENLQNQIREHIRLGQVMTKILQKDLRFEVCNKVVMGLICFRAKSNDMFNKALLYRCNETGNVSLASCVLQNKFVIRMCINSPKCSEEDLDSAYKLICNEYDILKPFQYRIEVMNQAELETFIRDPAKIHSSAEVSRRFPVVNPLEPCRSLAQISSQMHTAEYADPPGKSNKSPQVAAKGELPSAAPPSSRTPNSDISEKSDR</sequence>
<protein>
    <recommendedName>
        <fullName>Probable aromatic-L-amino-acid decarboxylase</fullName>
        <shortName>AADC</shortName>
        <ecNumber>4.1.1.28</ecNumber>
    </recommendedName>
    <alternativeName>
        <fullName>DOPA decarboxylase</fullName>
        <shortName>DDC</shortName>
    </alternativeName>
</protein>